<gene>
    <name type="primary">rps12</name>
</gene>
<protein>
    <recommendedName>
        <fullName evidence="3">Small ribosomal subunit protein uS12c</fullName>
    </recommendedName>
    <alternativeName>
        <fullName>30S ribosomal protein S12, chloroplastic</fullName>
    </alternativeName>
</protein>
<organism>
    <name type="scientific">Euglena gracilis</name>
    <dbReference type="NCBI Taxonomy" id="3039"/>
    <lineage>
        <taxon>Eukaryota</taxon>
        <taxon>Discoba</taxon>
        <taxon>Euglenozoa</taxon>
        <taxon>Euglenida</taxon>
        <taxon>Spirocuta</taxon>
        <taxon>Euglenophyceae</taxon>
        <taxon>Euglenales</taxon>
        <taxon>Euglenaceae</taxon>
        <taxon>Euglena</taxon>
    </lineage>
</organism>
<accession>P02368</accession>
<feature type="initiator methionine" description="Removed" evidence="1">
    <location>
        <position position="1"/>
    </location>
</feature>
<feature type="chain" id="PRO_0000146401" description="Small ribosomal subunit protein uS12c">
    <location>
        <begin position="2"/>
        <end position="125"/>
    </location>
</feature>
<feature type="region of interest" description="Disordered" evidence="2">
    <location>
        <begin position="1"/>
        <end position="23"/>
    </location>
</feature>
<feature type="compositionally biased region" description="Basic residues" evidence="2">
    <location>
        <begin position="9"/>
        <end position="20"/>
    </location>
</feature>
<sequence>MPTLEHLTRSPRKKIKRKTKSPALKGCPQKRAICMRVYTTTPKKPNSALRKVTRVRLSSGLEVTAYIPGIGHNLQEHSVVLIRGGRVKDLPGVKYHVIRGCLDAASVKNRKNARSKYGVKKPKPK</sequence>
<name>RR12_EUGGR</name>
<geneLocation type="chloroplast"/>
<reference key="1">
    <citation type="journal article" date="1984" name="Nucleic Acids Res.">
        <title>The genes for the ribosomal proteins S12 and S7 are clustered with the gene for the EF-Tu protein on the chloroplast genome of Euglena gracilis.</title>
        <authorList>
            <person name="Montandon P.-E."/>
            <person name="Stutz E."/>
        </authorList>
    </citation>
    <scope>NUCLEOTIDE SEQUENCE [GENOMIC DNA]</scope>
    <source>
        <strain>Z / UTEX 753</strain>
    </source>
</reference>
<reference key="2">
    <citation type="journal article" date="1987" name="Nucleic Acids Res.">
        <title>Euglena gracilis chloroplast DNA: the untranslated leader of tufA-ORF206 gene contains an intron.</title>
        <authorList>
            <person name="Montandon P.-E."/>
            <person name="Knuchel-Aegerter C."/>
            <person name="Stutz E."/>
        </authorList>
    </citation>
    <scope>NUCLEOTIDE SEQUENCE [GENOMIC DNA]</scope>
    <source>
        <strain>Z / UTEX 753</strain>
    </source>
</reference>
<reference key="3">
    <citation type="journal article" date="1993" name="Nucleic Acids Res.">
        <title>Complete sequence of Euglena gracilis chloroplast DNA.</title>
        <authorList>
            <person name="Hallick R.B."/>
            <person name="Hong L."/>
            <person name="Drager R.G."/>
            <person name="Favreau M.R."/>
            <person name="Monfort A."/>
            <person name="Orsat B."/>
            <person name="Spielmann A."/>
            <person name="Stutz E."/>
        </authorList>
    </citation>
    <scope>NUCLEOTIDE SEQUENCE [LARGE SCALE GENOMIC DNA]</scope>
    <source>
        <strain>Z / UTEX 753</strain>
    </source>
</reference>
<comment type="function">
    <text evidence="1">With S4 and S5 plays an important role in translational accuracy. Located at the interface of the 30S and 50S subunits (By similarity).</text>
</comment>
<comment type="subunit">
    <text>Part of the 30S ribosomal subunit.</text>
</comment>
<comment type="subcellular location">
    <subcellularLocation>
        <location>Plastid</location>
        <location>Chloroplast</location>
    </subcellularLocation>
</comment>
<comment type="similarity">
    <text evidence="3">Belongs to the universal ribosomal protein uS12 family.</text>
</comment>
<dbReference type="EMBL" id="Z11874">
    <property type="protein sequence ID" value="CAA77906.1"/>
    <property type="molecule type" value="Genomic_DNA"/>
</dbReference>
<dbReference type="EMBL" id="X00480">
    <property type="protein sequence ID" value="CAA25157.1"/>
    <property type="molecule type" value="Genomic_DNA"/>
</dbReference>
<dbReference type="EMBL" id="X06254">
    <property type="protein sequence ID" value="CAA29597.1"/>
    <property type="molecule type" value="Genomic_DNA"/>
</dbReference>
<dbReference type="EMBL" id="X70810">
    <property type="protein sequence ID" value="CAA50089.1"/>
    <property type="molecule type" value="Genomic_DNA"/>
</dbReference>
<dbReference type="PIR" id="A02728">
    <property type="entry name" value="R3EG12"/>
</dbReference>
<dbReference type="RefSeq" id="NP_041902.1">
    <property type="nucleotide sequence ID" value="NC_001603.2"/>
</dbReference>
<dbReference type="SMR" id="P02368"/>
<dbReference type="GeneID" id="807481"/>
<dbReference type="GO" id="GO:0009507">
    <property type="term" value="C:chloroplast"/>
    <property type="evidence" value="ECO:0007669"/>
    <property type="project" value="UniProtKB-SubCell"/>
</dbReference>
<dbReference type="GO" id="GO:0015935">
    <property type="term" value="C:small ribosomal subunit"/>
    <property type="evidence" value="ECO:0007669"/>
    <property type="project" value="InterPro"/>
</dbReference>
<dbReference type="GO" id="GO:0019843">
    <property type="term" value="F:rRNA binding"/>
    <property type="evidence" value="ECO:0007669"/>
    <property type="project" value="UniProtKB-UniRule"/>
</dbReference>
<dbReference type="GO" id="GO:0003735">
    <property type="term" value="F:structural constituent of ribosome"/>
    <property type="evidence" value="ECO:0007669"/>
    <property type="project" value="InterPro"/>
</dbReference>
<dbReference type="GO" id="GO:0006412">
    <property type="term" value="P:translation"/>
    <property type="evidence" value="ECO:0007669"/>
    <property type="project" value="UniProtKB-UniRule"/>
</dbReference>
<dbReference type="CDD" id="cd03368">
    <property type="entry name" value="Ribosomal_S12"/>
    <property type="match status" value="1"/>
</dbReference>
<dbReference type="FunFam" id="2.40.50.140:FF:000001">
    <property type="entry name" value="30S ribosomal protein S12"/>
    <property type="match status" value="1"/>
</dbReference>
<dbReference type="Gene3D" id="2.40.50.140">
    <property type="entry name" value="Nucleic acid-binding proteins"/>
    <property type="match status" value="1"/>
</dbReference>
<dbReference type="HAMAP" id="MF_00403_B">
    <property type="entry name" value="Ribosomal_uS12_B"/>
    <property type="match status" value="1"/>
</dbReference>
<dbReference type="InterPro" id="IPR012340">
    <property type="entry name" value="NA-bd_OB-fold"/>
</dbReference>
<dbReference type="InterPro" id="IPR006032">
    <property type="entry name" value="Ribosomal_uS12"/>
</dbReference>
<dbReference type="InterPro" id="IPR005679">
    <property type="entry name" value="Ribosomal_uS12_bac"/>
</dbReference>
<dbReference type="NCBIfam" id="TIGR00981">
    <property type="entry name" value="rpsL_bact"/>
    <property type="match status" value="1"/>
</dbReference>
<dbReference type="PANTHER" id="PTHR11652">
    <property type="entry name" value="30S RIBOSOMAL PROTEIN S12 FAMILY MEMBER"/>
    <property type="match status" value="1"/>
</dbReference>
<dbReference type="Pfam" id="PF00164">
    <property type="entry name" value="Ribosom_S12_S23"/>
    <property type="match status" value="1"/>
</dbReference>
<dbReference type="PIRSF" id="PIRSF002133">
    <property type="entry name" value="Ribosomal_S12/S23"/>
    <property type="match status" value="1"/>
</dbReference>
<dbReference type="PRINTS" id="PR01034">
    <property type="entry name" value="RIBOSOMALS12"/>
</dbReference>
<dbReference type="SUPFAM" id="SSF50249">
    <property type="entry name" value="Nucleic acid-binding proteins"/>
    <property type="match status" value="1"/>
</dbReference>
<dbReference type="PROSITE" id="PS00055">
    <property type="entry name" value="RIBOSOMAL_S12"/>
    <property type="match status" value="1"/>
</dbReference>
<proteinExistence type="inferred from homology"/>
<keyword id="KW-0150">Chloroplast</keyword>
<keyword id="KW-0934">Plastid</keyword>
<keyword id="KW-0687">Ribonucleoprotein</keyword>
<keyword id="KW-0689">Ribosomal protein</keyword>
<keyword id="KW-0694">RNA-binding</keyword>
<keyword id="KW-0699">rRNA-binding</keyword>
<evidence type="ECO:0000250" key="1"/>
<evidence type="ECO:0000256" key="2">
    <source>
        <dbReference type="SAM" id="MobiDB-lite"/>
    </source>
</evidence>
<evidence type="ECO:0000305" key="3"/>